<protein>
    <recommendedName>
        <fullName>CRISPR-associated protein Cas5 2</fullName>
    </recommendedName>
</protein>
<comment type="function">
    <text evidence="1">CRISPR (clustered regularly interspaced short palindromic repeat) is an adaptive immune system that provides protection against mobile genetic elements (viruses, transposable elements and conjugative plasmids). CRISPR clusters contain spacers, sequences complementary to antecedent mobile elements, and target invading nucleic acids. CRISPR clusters are transcribed and processed into CRISPR RNA (crRNA) (By similarity).</text>
</comment>
<comment type="subunit">
    <text evidence="2">Part of the aCascade ribonucleoprotein complex, minimally composed of Csa2 and Cas5a, which binds crRNA. Other possible components of aCascade in strain P1 are Cas6b (SSO1437) and Csa5 (SSO1443), while SSO1399, Cas5b (SSO1400) and SSO1401 have sometimes been seen weakly associated. Csa2 is probably the major RNA-binding subunit. The Csa2-Cas5a-crRNA complex also binds target DNA homologous to crRNA, probably forming an R-loop. Purified aCascade forms a filament about 6 nm in width.</text>
</comment>
<comment type="miscellaneous">
    <text>The aCascade complex was purified from strain P1.</text>
</comment>
<comment type="similarity">
    <text evidence="3">Belongs to the CRISPR-associated protein Cas5 family. Subtype I-A/Apern subfamily.</text>
</comment>
<feature type="chain" id="PRO_0000417893" description="CRISPR-associated protein Cas5 2">
    <location>
        <begin position="1"/>
        <end position="263"/>
    </location>
</feature>
<organism>
    <name type="scientific">Saccharolobus solfataricus (strain ATCC 35092 / DSM 1617 / JCM 11322 / P2)</name>
    <name type="common">Sulfolobus solfataricus</name>
    <dbReference type="NCBI Taxonomy" id="273057"/>
    <lineage>
        <taxon>Archaea</taxon>
        <taxon>Thermoproteota</taxon>
        <taxon>Thermoprotei</taxon>
        <taxon>Sulfolobales</taxon>
        <taxon>Sulfolobaceae</taxon>
        <taxon>Saccharolobus</taxon>
    </lineage>
</organism>
<dbReference type="EMBL" id="AE006641">
    <property type="protein sequence ID" value="AAK41635.1"/>
    <property type="molecule type" value="Genomic_DNA"/>
</dbReference>
<dbReference type="PIR" id="D90297">
    <property type="entry name" value="D90297"/>
</dbReference>
<dbReference type="SMR" id="Q97YC6"/>
<dbReference type="STRING" id="273057.SSO1400"/>
<dbReference type="PaxDb" id="273057-SSO1400"/>
<dbReference type="EnsemblBacteria" id="AAK41635">
    <property type="protein sequence ID" value="AAK41635"/>
    <property type="gene ID" value="SSO1400"/>
</dbReference>
<dbReference type="KEGG" id="sso:SSO1400"/>
<dbReference type="PATRIC" id="fig|273057.12.peg.1416"/>
<dbReference type="eggNOG" id="arCOG02670">
    <property type="taxonomic scope" value="Archaea"/>
</dbReference>
<dbReference type="HOGENOM" id="CLU_1072073_0_0_2"/>
<dbReference type="InParanoid" id="Q97YC6"/>
<dbReference type="Proteomes" id="UP000001974">
    <property type="component" value="Chromosome"/>
</dbReference>
<dbReference type="GO" id="GO:0051607">
    <property type="term" value="P:defense response to virus"/>
    <property type="evidence" value="ECO:0007669"/>
    <property type="project" value="UniProtKB-KW"/>
</dbReference>
<dbReference type="CDD" id="cd09753">
    <property type="entry name" value="Cas5_I-A"/>
    <property type="match status" value="1"/>
</dbReference>
<dbReference type="Gene3D" id="3.30.70.3120">
    <property type="match status" value="1"/>
</dbReference>
<dbReference type="InterPro" id="IPR013422">
    <property type="entry name" value="CRISPR-assoc_prot_Cas5_N"/>
</dbReference>
<dbReference type="InterPro" id="IPR010153">
    <property type="entry name" value="CRISPR-assoc_prot_Cas5a-typ"/>
</dbReference>
<dbReference type="InterPro" id="IPR053725">
    <property type="entry name" value="CRISPR_Cas5_sf"/>
</dbReference>
<dbReference type="NCBIfam" id="TIGR01874">
    <property type="entry name" value="cas_cas5a"/>
    <property type="match status" value="1"/>
</dbReference>
<dbReference type="NCBIfam" id="TIGR02593">
    <property type="entry name" value="CRISPR_cas5"/>
    <property type="match status" value="1"/>
</dbReference>
<reference key="1">
    <citation type="journal article" date="2001" name="Proc. Natl. Acad. Sci. U.S.A.">
        <title>The complete genome of the crenarchaeon Sulfolobus solfataricus P2.</title>
        <authorList>
            <person name="She Q."/>
            <person name="Singh R.K."/>
            <person name="Confalonieri F."/>
            <person name="Zivanovic Y."/>
            <person name="Allard G."/>
            <person name="Awayez M.J."/>
            <person name="Chan-Weiher C.C.-Y."/>
            <person name="Clausen I.G."/>
            <person name="Curtis B.A."/>
            <person name="De Moors A."/>
            <person name="Erauso G."/>
            <person name="Fletcher C."/>
            <person name="Gordon P.M.K."/>
            <person name="Heikamp-de Jong I."/>
            <person name="Jeffries A.C."/>
            <person name="Kozera C.J."/>
            <person name="Medina N."/>
            <person name="Peng X."/>
            <person name="Thi-Ngoc H.P."/>
            <person name="Redder P."/>
            <person name="Schenk M.E."/>
            <person name="Theriault C."/>
            <person name="Tolstrup N."/>
            <person name="Charlebois R.L."/>
            <person name="Doolittle W.F."/>
            <person name="Duguet M."/>
            <person name="Gaasterland T."/>
            <person name="Garrett R.A."/>
            <person name="Ragan M.A."/>
            <person name="Sensen C.W."/>
            <person name="Van der Oost J."/>
        </authorList>
    </citation>
    <scope>NUCLEOTIDE SEQUENCE [LARGE SCALE GENOMIC DNA]</scope>
    <source>
        <strain>ATCC 35092 / DSM 1617 / JCM 11322 / P2</strain>
    </source>
</reference>
<reference key="2">
    <citation type="journal article" date="2011" name="J. Biol. Chem.">
        <title>Structural and functional characterization of an archaeal clustered regularly interspaced short palindromic repeat (CRISPR)-associated complex for antiviral defense (CASCADE).</title>
        <authorList>
            <person name="Lintner N.G."/>
            <person name="Kerou M."/>
            <person name="Brumfield S.K."/>
            <person name="Graham S."/>
            <person name="Liu H."/>
            <person name="Naismith J.H."/>
            <person name="Sdano M."/>
            <person name="Peng N."/>
            <person name="She Q."/>
            <person name="Copie V."/>
            <person name="Young M.J."/>
            <person name="White M.F."/>
            <person name="Lawrence C.M."/>
        </authorList>
    </citation>
    <scope>SUBUNIT</scope>
    <source>
        <strain>ATCC 35091 / DSM 1616 / JCM 8930 / NBRC 15331 / P1</strain>
    </source>
</reference>
<proteinExistence type="evidence at protein level"/>
<accession>Q97YC6</accession>
<name>CAS5B_SACS2</name>
<sequence length="263" mass="29956">MKGVVIFGIHHWGFSVRVPRTSAGGSSYIVPPITTILGALSRGYCSDYAVKNNVSCTKEFIDKFSSDLFWVTYGTEEHMLMPYSDLLREERVPYRQSKNRSLDHVSDWFGVSAFGKVYCENVNFSILLLLNKENSEFWSKLGWQIISLGTKESLVTITDVKVVDVEESSDEDIYTIYYIPAECLTNTEEFEVVNMPVKSVYELSSKPSIGVFSNFLVPRKTPFIGGKVKVKKSNVRGDICKVYKMADKYVITFKEGLEKWYSK</sequence>
<keyword id="KW-0051">Antiviral defense</keyword>
<keyword id="KW-1185">Reference proteome</keyword>
<gene>
    <name type="primary">cas5b</name>
    <name type="ordered locus">SSO1400</name>
</gene>
<evidence type="ECO:0000250" key="1"/>
<evidence type="ECO:0000269" key="2">
    <source>
    </source>
</evidence>
<evidence type="ECO:0000305" key="3"/>